<feature type="chain" id="PRO_1000123043" description="Iron-sulfur cluster assembly protein CyaY">
    <location>
        <begin position="1"/>
        <end position="106"/>
    </location>
</feature>
<gene>
    <name evidence="1" type="primary">cyaY</name>
    <name type="ordered locus">E2348C_4105</name>
</gene>
<dbReference type="EMBL" id="FM180568">
    <property type="protein sequence ID" value="CAS11653.1"/>
    <property type="molecule type" value="Genomic_DNA"/>
</dbReference>
<dbReference type="RefSeq" id="WP_000999936.1">
    <property type="nucleotide sequence ID" value="NC_011601.1"/>
</dbReference>
<dbReference type="SMR" id="B7UNC2"/>
<dbReference type="KEGG" id="ecg:E2348C_4105"/>
<dbReference type="HOGENOM" id="CLU_080880_3_0_6"/>
<dbReference type="Proteomes" id="UP000008205">
    <property type="component" value="Chromosome"/>
</dbReference>
<dbReference type="GO" id="GO:0005829">
    <property type="term" value="C:cytosol"/>
    <property type="evidence" value="ECO:0007669"/>
    <property type="project" value="TreeGrafter"/>
</dbReference>
<dbReference type="GO" id="GO:0008199">
    <property type="term" value="F:ferric iron binding"/>
    <property type="evidence" value="ECO:0007669"/>
    <property type="project" value="InterPro"/>
</dbReference>
<dbReference type="GO" id="GO:0008198">
    <property type="term" value="F:ferrous iron binding"/>
    <property type="evidence" value="ECO:0007669"/>
    <property type="project" value="TreeGrafter"/>
</dbReference>
<dbReference type="GO" id="GO:0016226">
    <property type="term" value="P:iron-sulfur cluster assembly"/>
    <property type="evidence" value="ECO:0007669"/>
    <property type="project" value="UniProtKB-UniRule"/>
</dbReference>
<dbReference type="CDD" id="cd00503">
    <property type="entry name" value="Frataxin"/>
    <property type="match status" value="1"/>
</dbReference>
<dbReference type="FunFam" id="3.30.920.10:FF:000001">
    <property type="entry name" value="Iron-sulfur cluster assembly protein CyaY"/>
    <property type="match status" value="1"/>
</dbReference>
<dbReference type="Gene3D" id="3.30.920.10">
    <property type="entry name" value="Frataxin/CyaY"/>
    <property type="match status" value="1"/>
</dbReference>
<dbReference type="HAMAP" id="MF_00142">
    <property type="entry name" value="CyaY"/>
    <property type="match status" value="1"/>
</dbReference>
<dbReference type="InterPro" id="IPR047584">
    <property type="entry name" value="CyaY"/>
</dbReference>
<dbReference type="InterPro" id="IPR002908">
    <property type="entry name" value="Frataxin/CyaY"/>
</dbReference>
<dbReference type="InterPro" id="IPR036524">
    <property type="entry name" value="Frataxin/CyaY_sf"/>
</dbReference>
<dbReference type="InterPro" id="IPR020895">
    <property type="entry name" value="Frataxin_CS"/>
</dbReference>
<dbReference type="NCBIfam" id="TIGR03421">
    <property type="entry name" value="FeS_CyaY"/>
    <property type="match status" value="1"/>
</dbReference>
<dbReference type="PANTHER" id="PTHR16821">
    <property type="entry name" value="FRATAXIN"/>
    <property type="match status" value="1"/>
</dbReference>
<dbReference type="PANTHER" id="PTHR16821:SF2">
    <property type="entry name" value="FRATAXIN, MITOCHONDRIAL"/>
    <property type="match status" value="1"/>
</dbReference>
<dbReference type="Pfam" id="PF01491">
    <property type="entry name" value="Frataxin_Cyay"/>
    <property type="match status" value="1"/>
</dbReference>
<dbReference type="SMART" id="SM01219">
    <property type="entry name" value="Frataxin_Cyay"/>
    <property type="match status" value="1"/>
</dbReference>
<dbReference type="SUPFAM" id="SSF55387">
    <property type="entry name" value="Frataxin/Nqo15-like"/>
    <property type="match status" value="1"/>
</dbReference>
<dbReference type="PROSITE" id="PS01344">
    <property type="entry name" value="FRATAXIN_1"/>
    <property type="match status" value="1"/>
</dbReference>
<dbReference type="PROSITE" id="PS50810">
    <property type="entry name" value="FRATAXIN_2"/>
    <property type="match status" value="1"/>
</dbReference>
<sequence length="106" mass="12212">MNDSEFHRLADQLWLTIEEHLDDWDGDSDIDCEINGGVLTITFENGSKIIINRQEPLHQVWLATKQGGYHFDLKGDEWICDRSGETFWDLLEQAATQQAGETVSFR</sequence>
<keyword id="KW-0408">Iron</keyword>
<keyword id="KW-0479">Metal-binding</keyword>
<keyword id="KW-1185">Reference proteome</keyword>
<name>CYAY_ECO27</name>
<comment type="function">
    <text evidence="1">Involved in iron-sulfur (Fe-S) cluster assembly. May act as a regulator of Fe-S biogenesis.</text>
</comment>
<comment type="similarity">
    <text evidence="1">Belongs to the frataxin family.</text>
</comment>
<protein>
    <recommendedName>
        <fullName evidence="1">Iron-sulfur cluster assembly protein CyaY</fullName>
    </recommendedName>
</protein>
<reference key="1">
    <citation type="journal article" date="2009" name="J. Bacteriol.">
        <title>Complete genome sequence and comparative genome analysis of enteropathogenic Escherichia coli O127:H6 strain E2348/69.</title>
        <authorList>
            <person name="Iguchi A."/>
            <person name="Thomson N.R."/>
            <person name="Ogura Y."/>
            <person name="Saunders D."/>
            <person name="Ooka T."/>
            <person name="Henderson I.R."/>
            <person name="Harris D."/>
            <person name="Asadulghani M."/>
            <person name="Kurokawa K."/>
            <person name="Dean P."/>
            <person name="Kenny B."/>
            <person name="Quail M.A."/>
            <person name="Thurston S."/>
            <person name="Dougan G."/>
            <person name="Hayashi T."/>
            <person name="Parkhill J."/>
            <person name="Frankel G."/>
        </authorList>
    </citation>
    <scope>NUCLEOTIDE SEQUENCE [LARGE SCALE GENOMIC DNA]</scope>
    <source>
        <strain>E2348/69 / EPEC</strain>
    </source>
</reference>
<evidence type="ECO:0000255" key="1">
    <source>
        <dbReference type="HAMAP-Rule" id="MF_00142"/>
    </source>
</evidence>
<proteinExistence type="inferred from homology"/>
<accession>B7UNC2</accession>
<organism>
    <name type="scientific">Escherichia coli O127:H6 (strain E2348/69 / EPEC)</name>
    <dbReference type="NCBI Taxonomy" id="574521"/>
    <lineage>
        <taxon>Bacteria</taxon>
        <taxon>Pseudomonadati</taxon>
        <taxon>Pseudomonadota</taxon>
        <taxon>Gammaproteobacteria</taxon>
        <taxon>Enterobacterales</taxon>
        <taxon>Enterobacteriaceae</taxon>
        <taxon>Escherichia</taxon>
    </lineage>
</organism>